<organism>
    <name type="scientific">Rhizobium meliloti (strain 1021)</name>
    <name type="common">Ensifer meliloti</name>
    <name type="synonym">Sinorhizobium meliloti</name>
    <dbReference type="NCBI Taxonomy" id="266834"/>
    <lineage>
        <taxon>Bacteria</taxon>
        <taxon>Pseudomonadati</taxon>
        <taxon>Pseudomonadota</taxon>
        <taxon>Alphaproteobacteria</taxon>
        <taxon>Hyphomicrobiales</taxon>
        <taxon>Rhizobiaceae</taxon>
        <taxon>Sinorhizobium/Ensifer group</taxon>
        <taxon>Sinorhizobium</taxon>
    </lineage>
</organism>
<gene>
    <name type="primary">tatA</name>
    <name type="ordered locus">R00307</name>
    <name type="ORF">SMc00387</name>
</gene>
<sequence>MFDALARQADDPLLALIGLFRKDERPGKVDLGVGVYRDETGRTPIFRAVKAAEKRLLETQDSKAYIGPEGDLVFLDRLWELVGGDTIERSHVAGVQTPGGSGALRLAADLIARMGGRGIWLGLPSWPNHAPIFKAAGLDIATYDFFDIPSQSVIFDNLVSALEGAASGDAVLLHASCHNPTGGVLSEAQWMEIAALVAERGLLPLVDLAYQGFGRGLDQDVAGLRHLLGVVPEALVAVSCSKSFGLYRERAGAIFARTSSTASADRVRSNLAGLARTSYSMPPDHGAAVVRTILDDPELRRDWTEELETMRLRMTGLRRSLAEGLRTRWQSLGAVADQEGMFSMLPLSEAEVMRLRTEHGIYMPASGRINIAGLKTAEAAEIAGKFTSL</sequence>
<reference key="1">
    <citation type="journal article" date="1991" name="J. Bacteriol.">
        <title>Aspartate aminotransferase activity is required for aspartate catabolism and symbiotic nitrogen fixation in Rhizobium meliloti.</title>
        <authorList>
            <person name="Rastogi V.K."/>
            <person name="Watson R.J."/>
        </authorList>
    </citation>
    <scope>NUCLEOTIDE SEQUENCE [GENOMIC DNA]</scope>
    <source>
        <strain>JJ1c10</strain>
    </source>
</reference>
<reference key="2">
    <citation type="journal article" date="1993" name="J. Bacteriol.">
        <title>Cloning and nucleotide sequencing of Rhizobium meliloti aminotransferase genes: an aspartate aminotransferase required for symbiotic nitrogen fixation is atypical.</title>
        <authorList>
            <person name="Watson R.J."/>
            <person name="Rastogi V.K."/>
        </authorList>
    </citation>
    <scope>NUCLEOTIDE SEQUENCE [GENOMIC DNA]</scope>
    <source>
        <strain>JJ1c10</strain>
    </source>
</reference>
<reference key="3">
    <citation type="journal article" date="2001" name="Proc. Natl. Acad. Sci. U.S.A.">
        <title>Analysis of the chromosome sequence of the legume symbiont Sinorhizobium meliloti strain 1021.</title>
        <authorList>
            <person name="Capela D."/>
            <person name="Barloy-Hubler F."/>
            <person name="Gouzy J."/>
            <person name="Bothe G."/>
            <person name="Ampe F."/>
            <person name="Batut J."/>
            <person name="Boistard P."/>
            <person name="Becker A."/>
            <person name="Boutry M."/>
            <person name="Cadieu E."/>
            <person name="Dreano S."/>
            <person name="Gloux S."/>
            <person name="Godrie T."/>
            <person name="Goffeau A."/>
            <person name="Kahn D."/>
            <person name="Kiss E."/>
            <person name="Lelaure V."/>
            <person name="Masuy D."/>
            <person name="Pohl T."/>
            <person name="Portetelle D."/>
            <person name="Puehler A."/>
            <person name="Purnelle B."/>
            <person name="Ramsperger U."/>
            <person name="Renard C."/>
            <person name="Thebault P."/>
            <person name="Vandenbol M."/>
            <person name="Weidner S."/>
            <person name="Galibert F."/>
        </authorList>
    </citation>
    <scope>NUCLEOTIDE SEQUENCE [LARGE SCALE GENOMIC DNA]</scope>
    <source>
        <strain>1021</strain>
    </source>
</reference>
<reference key="4">
    <citation type="journal article" date="2001" name="Science">
        <title>The composite genome of the legume symbiont Sinorhizobium meliloti.</title>
        <authorList>
            <person name="Galibert F."/>
            <person name="Finan T.M."/>
            <person name="Long S.R."/>
            <person name="Puehler A."/>
            <person name="Abola P."/>
            <person name="Ampe F."/>
            <person name="Barloy-Hubler F."/>
            <person name="Barnett M.J."/>
            <person name="Becker A."/>
            <person name="Boistard P."/>
            <person name="Bothe G."/>
            <person name="Boutry M."/>
            <person name="Bowser L."/>
            <person name="Buhrmester J."/>
            <person name="Cadieu E."/>
            <person name="Capela D."/>
            <person name="Chain P."/>
            <person name="Cowie A."/>
            <person name="Davis R.W."/>
            <person name="Dreano S."/>
            <person name="Federspiel N.A."/>
            <person name="Fisher R.F."/>
            <person name="Gloux S."/>
            <person name="Godrie T."/>
            <person name="Goffeau A."/>
            <person name="Golding B."/>
            <person name="Gouzy J."/>
            <person name="Gurjal M."/>
            <person name="Hernandez-Lucas I."/>
            <person name="Hong A."/>
            <person name="Huizar L."/>
            <person name="Hyman R.W."/>
            <person name="Jones T."/>
            <person name="Kahn D."/>
            <person name="Kahn M.L."/>
            <person name="Kalman S."/>
            <person name="Keating D.H."/>
            <person name="Kiss E."/>
            <person name="Komp C."/>
            <person name="Lelaure V."/>
            <person name="Masuy D."/>
            <person name="Palm C."/>
            <person name="Peck M.C."/>
            <person name="Pohl T.M."/>
            <person name="Portetelle D."/>
            <person name="Purnelle B."/>
            <person name="Ramsperger U."/>
            <person name="Surzycki R."/>
            <person name="Thebault P."/>
            <person name="Vandenbol M."/>
            <person name="Vorhoelter F.J."/>
            <person name="Weidner S."/>
            <person name="Wells D.H."/>
            <person name="Wong K."/>
            <person name="Yeh K.-C."/>
            <person name="Batut J."/>
        </authorList>
    </citation>
    <scope>NUCLEOTIDE SEQUENCE [LARGE SCALE GENOMIC DNA]</scope>
    <source>
        <strain>1021</strain>
    </source>
</reference>
<proteinExistence type="inferred from homology"/>
<feature type="chain" id="PRO_0000123891" description="Tyrosine aminotransferase">
    <location>
        <begin position="1"/>
        <end position="389"/>
    </location>
</feature>
<feature type="modified residue" description="N6-(pyridoxal phosphate)lysine" evidence="1">
    <location>
        <position position="242"/>
    </location>
</feature>
<comment type="function">
    <text>Transaminase involved in tyrosine breakdown. Converts tyrosine to p-hydroxyphenylpyruvate.</text>
</comment>
<comment type="catalytic activity">
    <reaction>
        <text>L-tyrosine + 2-oxoglutarate = 3-(4-hydroxyphenyl)pyruvate + L-glutamate</text>
        <dbReference type="Rhea" id="RHEA:15093"/>
        <dbReference type="ChEBI" id="CHEBI:16810"/>
        <dbReference type="ChEBI" id="CHEBI:29985"/>
        <dbReference type="ChEBI" id="CHEBI:36242"/>
        <dbReference type="ChEBI" id="CHEBI:58315"/>
        <dbReference type="EC" id="2.6.1.5"/>
    </reaction>
</comment>
<comment type="cofactor">
    <cofactor>
        <name>pyridoxal 5'-phosphate</name>
        <dbReference type="ChEBI" id="CHEBI:597326"/>
    </cofactor>
</comment>
<comment type="pathway">
    <text>Amino-acid degradation; L-phenylalanine degradation; acetoacetate and fumarate from L-phenylalanine: step 2/6.</text>
</comment>
<comment type="subunit">
    <text evidence="1">Homodimer.</text>
</comment>
<comment type="similarity">
    <text evidence="2">Belongs to the class-I pyridoxal-phosphate-dependent aminotransferase family.</text>
</comment>
<dbReference type="EC" id="2.6.1.5"/>
<dbReference type="EMBL" id="L05065">
    <property type="protein sequence ID" value="AAA26362.1"/>
    <property type="molecule type" value="Genomic_DNA"/>
</dbReference>
<dbReference type="EMBL" id="AL591688">
    <property type="protein sequence ID" value="CAC41744.1"/>
    <property type="molecule type" value="Genomic_DNA"/>
</dbReference>
<dbReference type="PIR" id="B47094">
    <property type="entry name" value="B47094"/>
</dbReference>
<dbReference type="RefSeq" id="NP_384413.1">
    <property type="nucleotide sequence ID" value="NC_003047.1"/>
</dbReference>
<dbReference type="RefSeq" id="WP_010968491.1">
    <property type="nucleotide sequence ID" value="NC_003047.1"/>
</dbReference>
<dbReference type="SMR" id="Q02636"/>
<dbReference type="EnsemblBacteria" id="CAC41744">
    <property type="protein sequence ID" value="CAC41744"/>
    <property type="gene ID" value="SMc00387"/>
</dbReference>
<dbReference type="KEGG" id="sme:SMc00387"/>
<dbReference type="PATRIC" id="fig|266834.11.peg.1677"/>
<dbReference type="eggNOG" id="COG1448">
    <property type="taxonomic scope" value="Bacteria"/>
</dbReference>
<dbReference type="HOGENOM" id="CLU_032440_0_1_5"/>
<dbReference type="OrthoDB" id="9766445at2"/>
<dbReference type="UniPathway" id="UPA00139">
    <property type="reaction ID" value="UER00338"/>
</dbReference>
<dbReference type="Proteomes" id="UP000001976">
    <property type="component" value="Chromosome"/>
</dbReference>
<dbReference type="GO" id="GO:0005829">
    <property type="term" value="C:cytosol"/>
    <property type="evidence" value="ECO:0007669"/>
    <property type="project" value="TreeGrafter"/>
</dbReference>
<dbReference type="GO" id="GO:0042802">
    <property type="term" value="F:identical protein binding"/>
    <property type="evidence" value="ECO:0007669"/>
    <property type="project" value="TreeGrafter"/>
</dbReference>
<dbReference type="GO" id="GO:0004069">
    <property type="term" value="F:L-aspartate:2-oxoglutarate aminotransferase activity"/>
    <property type="evidence" value="ECO:0007669"/>
    <property type="project" value="TreeGrafter"/>
</dbReference>
<dbReference type="GO" id="GO:0004838">
    <property type="term" value="F:L-tyrosine-2-oxoglutarate transaminase activity"/>
    <property type="evidence" value="ECO:0007669"/>
    <property type="project" value="TreeGrafter"/>
</dbReference>
<dbReference type="GO" id="GO:0030170">
    <property type="term" value="F:pyridoxal phosphate binding"/>
    <property type="evidence" value="ECO:0007669"/>
    <property type="project" value="InterPro"/>
</dbReference>
<dbReference type="GO" id="GO:0033585">
    <property type="term" value="P:L-phenylalanine biosynthetic process from chorismate via phenylpyruvate"/>
    <property type="evidence" value="ECO:0007669"/>
    <property type="project" value="TreeGrafter"/>
</dbReference>
<dbReference type="GO" id="GO:0006559">
    <property type="term" value="P:L-phenylalanine catabolic process"/>
    <property type="evidence" value="ECO:0007669"/>
    <property type="project" value="UniProtKB-UniPathway"/>
</dbReference>
<dbReference type="GO" id="GO:0006572">
    <property type="term" value="P:tyrosine catabolic process"/>
    <property type="evidence" value="ECO:0007669"/>
    <property type="project" value="UniProtKB-KW"/>
</dbReference>
<dbReference type="CDD" id="cd00609">
    <property type="entry name" value="AAT_like"/>
    <property type="match status" value="1"/>
</dbReference>
<dbReference type="Gene3D" id="3.90.1150.10">
    <property type="entry name" value="Aspartate Aminotransferase, domain 1"/>
    <property type="match status" value="1"/>
</dbReference>
<dbReference type="Gene3D" id="3.40.640.10">
    <property type="entry name" value="Type I PLP-dependent aspartate aminotransferase-like (Major domain)"/>
    <property type="match status" value="1"/>
</dbReference>
<dbReference type="InterPro" id="IPR004839">
    <property type="entry name" value="Aminotransferase_I/II_large"/>
</dbReference>
<dbReference type="InterPro" id="IPR000796">
    <property type="entry name" value="Asp_trans"/>
</dbReference>
<dbReference type="InterPro" id="IPR004838">
    <property type="entry name" value="NHTrfase_class1_PyrdxlP-BS"/>
</dbReference>
<dbReference type="InterPro" id="IPR015424">
    <property type="entry name" value="PyrdxlP-dep_Trfase"/>
</dbReference>
<dbReference type="InterPro" id="IPR015421">
    <property type="entry name" value="PyrdxlP-dep_Trfase_major"/>
</dbReference>
<dbReference type="InterPro" id="IPR015422">
    <property type="entry name" value="PyrdxlP-dep_Trfase_small"/>
</dbReference>
<dbReference type="NCBIfam" id="NF006719">
    <property type="entry name" value="PRK09257.1"/>
    <property type="match status" value="1"/>
</dbReference>
<dbReference type="PANTHER" id="PTHR11879">
    <property type="entry name" value="ASPARTATE AMINOTRANSFERASE"/>
    <property type="match status" value="1"/>
</dbReference>
<dbReference type="PANTHER" id="PTHR11879:SF22">
    <property type="entry name" value="ASPARTATE AMINOTRANSFERASE, MITOCHONDRIAL"/>
    <property type="match status" value="1"/>
</dbReference>
<dbReference type="Pfam" id="PF00155">
    <property type="entry name" value="Aminotran_1_2"/>
    <property type="match status" value="1"/>
</dbReference>
<dbReference type="PRINTS" id="PR00799">
    <property type="entry name" value="TRANSAMINASE"/>
</dbReference>
<dbReference type="SUPFAM" id="SSF53383">
    <property type="entry name" value="PLP-dependent transferases"/>
    <property type="match status" value="1"/>
</dbReference>
<dbReference type="PROSITE" id="PS00105">
    <property type="entry name" value="AA_TRANSFER_CLASS_1"/>
    <property type="match status" value="1"/>
</dbReference>
<evidence type="ECO:0000250" key="1"/>
<evidence type="ECO:0000305" key="2"/>
<protein>
    <recommendedName>
        <fullName>Tyrosine aminotransferase</fullName>
        <shortName>TAT</shortName>
        <ecNumber>2.6.1.5</ecNumber>
    </recommendedName>
    <alternativeName>
        <fullName>L-tyrosine:2-oxoglutarate aminotransferase</fullName>
    </alternativeName>
</protein>
<keyword id="KW-0032">Aminotransferase</keyword>
<keyword id="KW-0585">Phenylalanine catabolism</keyword>
<keyword id="KW-0663">Pyridoxal phosphate</keyword>
<keyword id="KW-1185">Reference proteome</keyword>
<keyword id="KW-0808">Transferase</keyword>
<keyword id="KW-0828">Tyrosine catabolism</keyword>
<accession>Q02636</accession>
<name>ATTY_RHIME</name>